<proteinExistence type="evidence at protein level"/>
<evidence type="ECO:0000250" key="1">
    <source>
        <dbReference type="UniProtKB" id="Q8NAG6"/>
    </source>
</evidence>
<evidence type="ECO:0000255" key="2"/>
<evidence type="ECO:0000255" key="3">
    <source>
        <dbReference type="PROSITE-ProRule" id="PRU00313"/>
    </source>
</evidence>
<evidence type="ECO:0000255" key="4">
    <source>
        <dbReference type="PROSITE-ProRule" id="PRU00977"/>
    </source>
</evidence>
<evidence type="ECO:0000256" key="5">
    <source>
        <dbReference type="SAM" id="MobiDB-lite"/>
    </source>
</evidence>
<evidence type="ECO:0000269" key="6">
    <source>
    </source>
</evidence>
<evidence type="ECO:0000269" key="7">
    <source>
    </source>
</evidence>
<evidence type="ECO:0000269" key="8">
    <source>
    </source>
</evidence>
<evidence type="ECO:0000305" key="9"/>
<evidence type="ECO:0000312" key="10">
    <source>
        <dbReference type="Proteomes" id="UP000001940"/>
    </source>
</evidence>
<evidence type="ECO:0000312" key="11">
    <source>
        <dbReference type="WormBase" id="F42H11.2"/>
    </source>
</evidence>
<feature type="chain" id="PRO_0000438147" description="Ankyrin repeat and LEM domain-containing protein 1 homolog" evidence="9">
    <location>
        <begin position="1"/>
        <end position="704"/>
    </location>
</feature>
<feature type="repeat" description="ANK 1" evidence="2">
    <location>
        <begin position="28"/>
        <end position="59"/>
    </location>
</feature>
<feature type="repeat" description="ANK 2" evidence="2">
    <location>
        <begin position="63"/>
        <end position="93"/>
    </location>
</feature>
<feature type="domain" description="LEM" evidence="3">
    <location>
        <begin position="425"/>
        <end position="470"/>
    </location>
</feature>
<feature type="domain" description="GIY-YIG" evidence="4">
    <location>
        <begin position="525"/>
        <end position="635"/>
    </location>
</feature>
<feature type="region of interest" description="Disordered" evidence="5">
    <location>
        <begin position="1"/>
        <end position="29"/>
    </location>
</feature>
<feature type="region of interest" description="Disordered" evidence="5">
    <location>
        <begin position="247"/>
        <end position="293"/>
    </location>
</feature>
<feature type="region of interest" description="Disordered" evidence="5">
    <location>
        <begin position="314"/>
        <end position="358"/>
    </location>
</feature>
<feature type="region of interest" description="Disordered" evidence="5">
    <location>
        <begin position="381"/>
        <end position="421"/>
    </location>
</feature>
<feature type="compositionally biased region" description="Low complexity" evidence="5">
    <location>
        <begin position="8"/>
        <end position="22"/>
    </location>
</feature>
<feature type="compositionally biased region" description="Basic residues" evidence="5">
    <location>
        <begin position="276"/>
        <end position="288"/>
    </location>
</feature>
<feature type="compositionally biased region" description="Low complexity" evidence="5">
    <location>
        <begin position="329"/>
        <end position="346"/>
    </location>
</feature>
<feature type="compositionally biased region" description="Low complexity" evidence="5">
    <location>
        <begin position="384"/>
        <end position="405"/>
    </location>
</feature>
<feature type="mutagenesis site" description="In tm3468; lack of phosphorylation." evidence="7">
    <location>
        <begin position="141"/>
        <end position="250"/>
    </location>
</feature>
<feature type="mutagenesis site" description="In mn155; increase of rad-51 foci in meiotic prophase and increase in rmh-1 foci in mid pachytene. In a RNAi-mediated mcm-7 or capg-1 knockdown, unresolved chromatin bridges at the end of cell division and reduced embryonic viability." evidence="7 8">
    <location>
        <begin position="190"/>
        <end position="704"/>
    </location>
</feature>
<feature type="mutagenesis site" description="Increased sensitivity to ionizing radiation, decreased localization to the midbody and lack of phosphorylation; when associated with Ala-194. In a RNAi-mediated capg-1 knockdown, delayed midbody localization and persistent chromatin bridge formation; when associated with Ala-194." evidence="7">
    <original>S</original>
    <variation>A</variation>
    <location>
        <position position="192"/>
    </location>
</feature>
<feature type="mutagenesis site" description="Increased sensitivity to ionizing radiation, decreased localization to the midbody and lack of phosphorylation; when associated with Ala-192. In a RNAi-mediated capg-1 knockdown, delayed midbody localization and persistent chromatin bridge formation; when associated with Ala-192." evidence="7">
    <original>S</original>
    <variation>A</variation>
    <location>
        <position position="194"/>
    </location>
</feature>
<feature type="mutagenesis site" description="Failure to localize to midbodies and hypersensitivity to ionizing radiation; when associated with Ala-558. In a RNAi-mediated capg-1 knockdown, excessive and persistent chromatin-bridge formation; when associated with Ala-558." evidence="7">
    <original>Y</original>
    <variation>A</variation>
    <location>
        <position position="556"/>
    </location>
</feature>
<feature type="mutagenesis site" description="Failure to localize to midbodies and hypersensitivity to ionizing radiation; when associated with Ala-556. In a RNAi-mediated capg-1 knockdown, excessive and persistent chromatin-bridge formation; when associated with Ala-556." evidence="7">
    <original>G</original>
    <variation>A</variation>
    <location>
        <position position="558"/>
    </location>
</feature>
<feature type="mutagenesis site" description="In op444; severe reduction in endonucleolytic activity. Severe embryonic lethality of progeny of adults treated with X-ray, UV-C light or cisplatin characterized by chromosome mis-segregation and formation of anaphase bridges. Irradiated L1 larvae are uncoordinated and have a protruding vulva. In germline cells, cell cycle arrest and apoptosis following DNA damage are not affected. In addition, progeny of non-irradiated adults die at the embryonic stage in a baf-1 and unc-32 mutant background." evidence="6">
    <original>L</original>
    <variation>F</variation>
    <location>
        <position position="659"/>
    </location>
</feature>
<name>ANKL1_CAEEL</name>
<sequence>MPPNGAITTTPRSRMPPTTPSSGKSRPKKETLHYLAASSSTTSVDAARTLLERGANVNAIDRDGATPLHYACTHDNVAMAQLLLTFGADPMSADKLGRTAYSIAKGNTLRFLRRYKKSSNRQRLGFFRRFFACHSRNETFFIVRNNQEVAPLRPTALAEAASISFNRGNVLTNSYRCAKKKIRATFHAIRRSRSNSTATLQDVVLTSEGIRTVTTPSRRAPKATVYAKRSMSVSDLLLIPDRRDIKNEDVKTRGSPVKKTRGTGRSRTPEAILNPRKQRTPVNHHKRSKSQETKLVAMPSPNSMAYYNTSRARNAGLRPAPSAPPLSPEPAIAAVKTPKTPTTPKTSKGRSKSPANTTAYFTADESLELLGNNMEKLNIESKSAKSSKLKTPSKPTTSSSTSFSSAEDDKEAEVSTPTTVDDGEIRKIRRLREGELKSELKKFGISPAGPLDARTRRLYEKKLLIERRKITNRGYSPDADVVSCRNSPQLELVLRNGFLPADFASRARKCDENVRSEFSGNGFGYNAFCYLIMDPRILGSNVENLTLETFVRSIFYVGKGSKNRPLAHFIDARNERRDKLDKLKTCEKLKTIDELWTLGFGIPRHEISHGVSDEEAFVREASIIEAVKLKNLRNKKAGEFHGTTKSWDNITKSEYGTFLLDRALSTLKLEGIRLITEDNLPDSLYPYVNNRRGAGGGRTPKTPK</sequence>
<keyword id="KW-0040">ANK repeat</keyword>
<keyword id="KW-0131">Cell cycle</keyword>
<keyword id="KW-0132">Cell division</keyword>
<keyword id="KW-0158">Chromosome</keyword>
<keyword id="KW-0963">Cytoplasm</keyword>
<keyword id="KW-0206">Cytoskeleton</keyword>
<keyword id="KW-0227">DNA damage</keyword>
<keyword id="KW-0234">DNA repair</keyword>
<keyword id="KW-0255">Endonuclease</keyword>
<keyword id="KW-0378">Hydrolase</keyword>
<keyword id="KW-0469">Meiosis</keyword>
<keyword id="KW-0498">Mitosis</keyword>
<keyword id="KW-0540">Nuclease</keyword>
<keyword id="KW-0539">Nucleus</keyword>
<keyword id="KW-0597">Phosphoprotein</keyword>
<keyword id="KW-1185">Reference proteome</keyword>
<keyword id="KW-0677">Repeat</keyword>
<protein>
    <recommendedName>
        <fullName evidence="9">Ankyrin repeat and LEM domain-containing protein 1 homolog</fullName>
        <ecNumber evidence="6">3.1.-.-</ecNumber>
    </recommendedName>
    <alternativeName>
        <fullName evidence="1">LEM-domain containing protein 3</fullName>
    </alternativeName>
</protein>
<reference evidence="10" key="1">
    <citation type="journal article" date="1998" name="Science">
        <title>Genome sequence of the nematode C. elegans: a platform for investigating biology.</title>
        <authorList>
            <consortium name="The C. elegans sequencing consortium"/>
        </authorList>
    </citation>
    <scope>NUCLEOTIDE SEQUENCE [LARGE SCALE GENOMIC DNA]</scope>
    <source>
        <strain evidence="10">Bristol N2</strain>
    </source>
</reference>
<reference evidence="9" key="2">
    <citation type="journal article" date="2012" name="PLoS ONE">
        <title>LEM-3 - a LEM domain containing nuclease involved in the DNA damage response in C. elegans.</title>
        <authorList>
            <person name="Dittrich C.M."/>
            <person name="Kratz K."/>
            <person name="Sendoel A."/>
            <person name="Gruenbaum Y."/>
            <person name="Jiricny J."/>
            <person name="Hengartner M.O."/>
        </authorList>
    </citation>
    <scope>FUNCTION</scope>
    <scope>CATALYTIC ACTIVITY</scope>
    <scope>ACTIVITY REGULATION</scope>
    <scope>SUBCELLULAR LOCATION</scope>
    <scope>DEVELOPMENTAL STAGE</scope>
    <scope>MUTAGENESIS OF LEU-659</scope>
</reference>
<reference key="3">
    <citation type="journal article" date="2018" name="Nat. Commun.">
        <title>LEM-3 is a midbody-tethered DNA nuclease that resolves chromatin bridges during late mitosis.</title>
        <authorList>
            <person name="Hong Y."/>
            <person name="Sonneville R."/>
            <person name="Wang B."/>
            <person name="Scheidt V."/>
            <person name="Meier B."/>
            <person name="Woglar A."/>
            <person name="Demetriou S."/>
            <person name="Labib K."/>
            <person name="Jantsch V."/>
            <person name="Gartner A."/>
        </authorList>
    </citation>
    <scope>FUNCTION</scope>
    <scope>SUBCELLULAR LOCATION</scope>
    <scope>PHOSPHORYLATION</scope>
    <scope>MUTAGENESIS OF 141-PHE--VAL-250; 190-ARG--LYS-704; SER-192; SER-194; TYR-556 AND GLY-558</scope>
</reference>
<reference key="4">
    <citation type="journal article" date="2018" name="PLoS Genet.">
        <title>The conserved LEM-3/Ankle1 nuclease is involved in the combinatorial regulation of meiotic recombination repair and chromosome segregation in Caenorhabditis elegans.</title>
        <authorList>
            <person name="Hong Y."/>
            <person name="Velkova M."/>
            <person name="Silva N."/>
            <person name="Jagut M."/>
            <person name="Scheidt V."/>
            <person name="Labib K."/>
            <person name="Jantsch V."/>
            <person name="Gartner A."/>
        </authorList>
    </citation>
    <scope>FUNCTION</scope>
    <scope>SUBCELLULAR LOCATION</scope>
    <scope>MUTAGENESIS OF 190-ARG--LYS-704</scope>
</reference>
<organism evidence="10">
    <name type="scientific">Caenorhabditis elegans</name>
    <dbReference type="NCBI Taxonomy" id="6239"/>
    <lineage>
        <taxon>Eukaryota</taxon>
        <taxon>Metazoa</taxon>
        <taxon>Ecdysozoa</taxon>
        <taxon>Nematoda</taxon>
        <taxon>Chromadorea</taxon>
        <taxon>Rhabditida</taxon>
        <taxon>Rhabditina</taxon>
        <taxon>Rhabditomorpha</taxon>
        <taxon>Rhabditoidea</taxon>
        <taxon>Rhabditidae</taxon>
        <taxon>Peloderinae</taxon>
        <taxon>Caenorhabditis</taxon>
    </lineage>
</organism>
<comment type="function">
    <text evidence="6 7 8">Endonuclease which, in association with baf-1, plays an essential role during embryogenesis in the DNA repair response following DNA damage probably by ensuring proper chromosome segregation (PubMed:22383942). Also required during postembryonic cell divisions after DNA damage caused by ionizing radiation to ensure normal cell proliferation (PubMed:22383942). Resolves chromatin bridges in late mitosis that result from incomplete DNA replication, defective chromosome condensation or unresolved recombination intermediates (PubMed:29463814). Together with brc-1, contributes to genome integrity by resolving mitotic chromatin bridges that result from incomplete processing of DNA breaks (PubMed:29463814). In parallel to the slx-1/mus-81 pathway, acts in processing early recombination intermediates in meiotic prophase I to prevent illegitimate recombination (PubMed:29879106). Also involved in processing remaining, erroneous recombination intermediates that persist into the second meiotic division (PubMed:29879106).</text>
</comment>
<comment type="activity regulation">
    <text evidence="6">Inhibited by EDTA.</text>
</comment>
<comment type="subcellular location">
    <subcellularLocation>
        <location evidence="6 7 8">Cytoplasm</location>
    </subcellularLocation>
    <subcellularLocation>
        <location evidence="8">Nucleus</location>
    </subcellularLocation>
    <subcellularLocation>
        <location evidence="7">Chromosome</location>
    </subcellularLocation>
    <subcellularLocation>
        <location evidence="7">Midbody</location>
    </subcellularLocation>
    <subcellularLocation>
        <location evidence="7">Cytoplasm</location>
        <location evidence="7">Cytoskeleton</location>
        <location evidence="7">Spindle</location>
    </subcellularLocation>
    <text evidence="6 7 8">Localizes to foci-like structures outside the nucleus (PubMed:22383942, PubMed:29463814, PubMed:29879106). In pachytene, localizes to foci both in and outside of the nucleus (PubMed:29879106). Colocalizes with air-2 between dividing nuclei in meiosis II (PubMed:29879106). In mitosis, localizes to the center of chromatin bridges that are formed in response to DNA defects (PubMed:29463814). Forms initially a ring like structure encircling chromatin bridges between two separated daughter cells until in late telophase, localizes to the center of chromatin bridges (PubMed:29463814). Colocalizes with air-2 at the midbody (PubMed:29463814). Midbody localization depends on the formation of the central spindle and the midbody and on air-2 (PubMed:29463814). Colocalizes with the central spindle component zen-4 at the central spindle (PubMed:29463814).</text>
</comment>
<comment type="developmental stage">
    <text evidence="6 7">Expressed in embryos.</text>
</comment>
<comment type="PTM">
    <text evidence="7">Phosphorylated. Phosphorylated during telophase when localized at the midbody.</text>
</comment>
<gene>
    <name evidence="11" type="primary">lem-3</name>
    <name evidence="11" type="synonym">rad-1</name>
    <name evidence="11" type="ORF">F42H11.2</name>
</gene>
<accession>G5EGA3</accession>
<dbReference type="EC" id="3.1.-.-" evidence="6"/>
<dbReference type="EMBL" id="BX284601">
    <property type="protein sequence ID" value="CAB05722.2"/>
    <property type="molecule type" value="Genomic_DNA"/>
</dbReference>
<dbReference type="RefSeq" id="NP_492539.2">
    <property type="nucleotide sequence ID" value="NM_060138.4"/>
</dbReference>
<dbReference type="SMR" id="G5EGA3"/>
<dbReference type="FunCoup" id="G5EGA3">
    <property type="interactions" value="224"/>
</dbReference>
<dbReference type="STRING" id="6239.F42H11.2.1"/>
<dbReference type="PaxDb" id="6239-F42H11.2"/>
<dbReference type="PeptideAtlas" id="G5EGA3"/>
<dbReference type="EnsemblMetazoa" id="F42H11.2.1">
    <property type="protein sequence ID" value="F42H11.2.1"/>
    <property type="gene ID" value="WBGene00002276"/>
</dbReference>
<dbReference type="GeneID" id="172792"/>
<dbReference type="KEGG" id="cel:CELE_F42H11.2"/>
<dbReference type="AGR" id="WB:WBGene00002276"/>
<dbReference type="CTD" id="172792"/>
<dbReference type="WormBase" id="F42H11.2">
    <property type="protein sequence ID" value="CE47022"/>
    <property type="gene ID" value="WBGene00002276"/>
    <property type="gene designation" value="lem-3"/>
</dbReference>
<dbReference type="eggNOG" id="KOG0504">
    <property type="taxonomic scope" value="Eukaryota"/>
</dbReference>
<dbReference type="GeneTree" id="ENSGT00940000168304"/>
<dbReference type="HOGENOM" id="CLU_391936_0_0_1"/>
<dbReference type="InParanoid" id="G5EGA3"/>
<dbReference type="OMA" id="CYILIDP"/>
<dbReference type="OrthoDB" id="1601181at2759"/>
<dbReference type="PRO" id="PR:G5EGA3"/>
<dbReference type="Proteomes" id="UP000001940">
    <property type="component" value="Chromosome I"/>
</dbReference>
<dbReference type="Bgee" id="WBGene00002276">
    <property type="expression patterns" value="Expressed in germ line (C elegans) and 4 other cell types or tissues"/>
</dbReference>
<dbReference type="GO" id="GO:0000793">
    <property type="term" value="C:condensed chromosome"/>
    <property type="evidence" value="ECO:0000314"/>
    <property type="project" value="UniProtKB"/>
</dbReference>
<dbReference type="GO" id="GO:0005737">
    <property type="term" value="C:cytoplasm"/>
    <property type="evidence" value="ECO:0000314"/>
    <property type="project" value="UniProtKB"/>
</dbReference>
<dbReference type="GO" id="GO:0030496">
    <property type="term" value="C:midbody"/>
    <property type="evidence" value="ECO:0000314"/>
    <property type="project" value="UniProtKB"/>
</dbReference>
<dbReference type="GO" id="GO:1990023">
    <property type="term" value="C:mitotic spindle midzone"/>
    <property type="evidence" value="ECO:0000314"/>
    <property type="project" value="UniProtKB"/>
</dbReference>
<dbReference type="GO" id="GO:0005654">
    <property type="term" value="C:nucleoplasm"/>
    <property type="evidence" value="ECO:0000318"/>
    <property type="project" value="GO_Central"/>
</dbReference>
<dbReference type="GO" id="GO:0051233">
    <property type="term" value="C:spindle midzone"/>
    <property type="evidence" value="ECO:0000314"/>
    <property type="project" value="UniProtKB"/>
</dbReference>
<dbReference type="GO" id="GO:0004520">
    <property type="term" value="F:DNA endonuclease activity"/>
    <property type="evidence" value="ECO:0000314"/>
    <property type="project" value="WormBase"/>
</dbReference>
<dbReference type="GO" id="GO:0051301">
    <property type="term" value="P:cell division"/>
    <property type="evidence" value="ECO:0007669"/>
    <property type="project" value="UniProtKB-KW"/>
</dbReference>
<dbReference type="GO" id="GO:0072711">
    <property type="term" value="P:cellular response to hydroxyurea"/>
    <property type="evidence" value="ECO:0000314"/>
    <property type="project" value="UniProtKB"/>
</dbReference>
<dbReference type="GO" id="GO:0071479">
    <property type="term" value="P:cellular response to ionizing radiation"/>
    <property type="evidence" value="ECO:0000316"/>
    <property type="project" value="UniProtKB"/>
</dbReference>
<dbReference type="GO" id="GO:0006308">
    <property type="term" value="P:DNA catabolic process"/>
    <property type="evidence" value="ECO:0000314"/>
    <property type="project" value="WormBase"/>
</dbReference>
<dbReference type="GO" id="GO:0006974">
    <property type="term" value="P:DNA damage response"/>
    <property type="evidence" value="ECO:0000314"/>
    <property type="project" value="UniProtKB"/>
</dbReference>
<dbReference type="GO" id="GO:0000724">
    <property type="term" value="P:double-strand break repair via homologous recombination"/>
    <property type="evidence" value="ECO:0000316"/>
    <property type="project" value="UniProtKB"/>
</dbReference>
<dbReference type="GO" id="GO:0009792">
    <property type="term" value="P:embryo development ending in birth or egg hatching"/>
    <property type="evidence" value="ECO:0000316"/>
    <property type="project" value="UniProtKB"/>
</dbReference>
<dbReference type="GO" id="GO:0000070">
    <property type="term" value="P:mitotic sister chromatid segregation"/>
    <property type="evidence" value="ECO:0000316"/>
    <property type="project" value="UniProtKB"/>
</dbReference>
<dbReference type="GO" id="GO:0000712">
    <property type="term" value="P:resolution of meiotic recombination intermediates"/>
    <property type="evidence" value="ECO:0000316"/>
    <property type="project" value="UniProtKB"/>
</dbReference>
<dbReference type="GO" id="GO:0009411">
    <property type="term" value="P:response to UV"/>
    <property type="evidence" value="ECO:0000315"/>
    <property type="project" value="WormBase"/>
</dbReference>
<dbReference type="GO" id="GO:0010225">
    <property type="term" value="P:response to UV-C"/>
    <property type="evidence" value="ECO:0000315"/>
    <property type="project" value="WormBase"/>
</dbReference>
<dbReference type="GO" id="GO:0010165">
    <property type="term" value="P:response to X-ray"/>
    <property type="evidence" value="ECO:0000315"/>
    <property type="project" value="WormBase"/>
</dbReference>
<dbReference type="CDD" id="cd10454">
    <property type="entry name" value="GIY-YIG_COG3680_Meta"/>
    <property type="match status" value="1"/>
</dbReference>
<dbReference type="CDD" id="cd12940">
    <property type="entry name" value="LEM_LAP2_LEMD1"/>
    <property type="match status" value="1"/>
</dbReference>
<dbReference type="Gene3D" id="1.10.720.40">
    <property type="match status" value="1"/>
</dbReference>
<dbReference type="Gene3D" id="1.25.40.20">
    <property type="entry name" value="Ankyrin repeat-containing domain"/>
    <property type="match status" value="1"/>
</dbReference>
<dbReference type="InterPro" id="IPR034998">
    <property type="entry name" value="ANKLE1"/>
</dbReference>
<dbReference type="InterPro" id="IPR002110">
    <property type="entry name" value="Ankyrin_rpt"/>
</dbReference>
<dbReference type="InterPro" id="IPR036770">
    <property type="entry name" value="Ankyrin_rpt-contain_sf"/>
</dbReference>
<dbReference type="InterPro" id="IPR000305">
    <property type="entry name" value="GIY-YIG_endonuc"/>
</dbReference>
<dbReference type="InterPro" id="IPR011015">
    <property type="entry name" value="LEM/LEM-like_dom_sf"/>
</dbReference>
<dbReference type="InterPro" id="IPR003887">
    <property type="entry name" value="LEM_dom"/>
</dbReference>
<dbReference type="PANTHER" id="PTHR46427">
    <property type="entry name" value="ANKYRIN REPEAT AND LEM DOMAIN-CONTAINING PROTEIN 1"/>
    <property type="match status" value="1"/>
</dbReference>
<dbReference type="PANTHER" id="PTHR46427:SF1">
    <property type="entry name" value="ANKYRIN REPEAT AND LEM DOMAIN-CONTAINING PROTEIN 1"/>
    <property type="match status" value="1"/>
</dbReference>
<dbReference type="Pfam" id="PF13637">
    <property type="entry name" value="Ank_4"/>
    <property type="match status" value="1"/>
</dbReference>
<dbReference type="Pfam" id="PF03020">
    <property type="entry name" value="LEM"/>
    <property type="match status" value="1"/>
</dbReference>
<dbReference type="Pfam" id="PF22945">
    <property type="entry name" value="LEM-3_GIY-YIG"/>
    <property type="match status" value="1"/>
</dbReference>
<dbReference type="SMART" id="SM00248">
    <property type="entry name" value="ANK"/>
    <property type="match status" value="2"/>
</dbReference>
<dbReference type="SMART" id="SM00540">
    <property type="entry name" value="LEM"/>
    <property type="match status" value="1"/>
</dbReference>
<dbReference type="SUPFAM" id="SSF48403">
    <property type="entry name" value="Ankyrin repeat"/>
    <property type="match status" value="1"/>
</dbReference>
<dbReference type="SUPFAM" id="SSF63451">
    <property type="entry name" value="LEM domain"/>
    <property type="match status" value="1"/>
</dbReference>
<dbReference type="PROSITE" id="PS50297">
    <property type="entry name" value="ANK_REP_REGION"/>
    <property type="match status" value="1"/>
</dbReference>
<dbReference type="PROSITE" id="PS50088">
    <property type="entry name" value="ANK_REPEAT"/>
    <property type="match status" value="2"/>
</dbReference>
<dbReference type="PROSITE" id="PS50164">
    <property type="entry name" value="GIY_YIG"/>
    <property type="match status" value="1"/>
</dbReference>
<dbReference type="PROSITE" id="PS50954">
    <property type="entry name" value="LEM"/>
    <property type="match status" value="1"/>
</dbReference>